<dbReference type="EMBL" id="BA000003">
    <property type="protein sequence ID" value="BAB13031.1"/>
    <property type="molecule type" value="Genomic_DNA"/>
</dbReference>
<dbReference type="RefSeq" id="NP_240145.1">
    <property type="nucleotide sequence ID" value="NC_002528.1"/>
</dbReference>
<dbReference type="RefSeq" id="WP_010896066.1">
    <property type="nucleotide sequence ID" value="NC_002528.1"/>
</dbReference>
<dbReference type="SMR" id="P57408"/>
<dbReference type="STRING" id="563178.BUAP5A_316"/>
<dbReference type="EnsemblBacteria" id="BAB13031">
    <property type="protein sequence ID" value="BAB13031"/>
    <property type="gene ID" value="BAB13031"/>
</dbReference>
<dbReference type="KEGG" id="buc:BU323"/>
<dbReference type="PATRIC" id="fig|107806.10.peg.335"/>
<dbReference type="eggNOG" id="COG1253">
    <property type="taxonomic scope" value="Bacteria"/>
</dbReference>
<dbReference type="HOGENOM" id="CLU_015237_0_0_6"/>
<dbReference type="BioCyc" id="BAPH107806:GBZJ-316-MONOMER"/>
<dbReference type="Proteomes" id="UP000001806">
    <property type="component" value="Chromosome"/>
</dbReference>
<dbReference type="GO" id="GO:0005886">
    <property type="term" value="C:plasma membrane"/>
    <property type="evidence" value="ECO:0007669"/>
    <property type="project" value="UniProtKB-SubCell"/>
</dbReference>
<dbReference type="GO" id="GO:0050660">
    <property type="term" value="F:flavin adenine dinucleotide binding"/>
    <property type="evidence" value="ECO:0007669"/>
    <property type="project" value="InterPro"/>
</dbReference>
<dbReference type="CDD" id="cd04590">
    <property type="entry name" value="CBS_pair_CorC_HlyC_assoc"/>
    <property type="match status" value="1"/>
</dbReference>
<dbReference type="FunFam" id="3.10.580.10:FF:000008">
    <property type="entry name" value="Integral membrane protein TerC"/>
    <property type="match status" value="1"/>
</dbReference>
<dbReference type="Gene3D" id="3.30.465.10">
    <property type="match status" value="1"/>
</dbReference>
<dbReference type="Gene3D" id="3.10.580.10">
    <property type="entry name" value="CBS-domain"/>
    <property type="match status" value="1"/>
</dbReference>
<dbReference type="InterPro" id="IPR000644">
    <property type="entry name" value="CBS_dom"/>
</dbReference>
<dbReference type="InterPro" id="IPR046342">
    <property type="entry name" value="CBS_dom_sf"/>
</dbReference>
<dbReference type="InterPro" id="IPR036318">
    <property type="entry name" value="FAD-bd_PCMH-like_sf"/>
</dbReference>
<dbReference type="InterPro" id="IPR016169">
    <property type="entry name" value="FAD-bd_PCMH_sub2"/>
</dbReference>
<dbReference type="InterPro" id="IPR005496">
    <property type="entry name" value="Integral_membrane_TerC"/>
</dbReference>
<dbReference type="InterPro" id="IPR044751">
    <property type="entry name" value="Ion_transp-like_CBS"/>
</dbReference>
<dbReference type="InterPro" id="IPR005170">
    <property type="entry name" value="Transptr-assoc_dom"/>
</dbReference>
<dbReference type="PANTHER" id="PTHR22777">
    <property type="entry name" value="HEMOLYSIN-RELATED"/>
    <property type="match status" value="1"/>
</dbReference>
<dbReference type="PANTHER" id="PTHR22777:SF15">
    <property type="entry name" value="UPF0053 INNER MEMBRANE PROTEIN YOAE"/>
    <property type="match status" value="1"/>
</dbReference>
<dbReference type="Pfam" id="PF03471">
    <property type="entry name" value="CorC_HlyC"/>
    <property type="match status" value="1"/>
</dbReference>
<dbReference type="Pfam" id="PF03741">
    <property type="entry name" value="TerC"/>
    <property type="match status" value="1"/>
</dbReference>
<dbReference type="SMART" id="SM01091">
    <property type="entry name" value="CorC_HlyC"/>
    <property type="match status" value="1"/>
</dbReference>
<dbReference type="SUPFAM" id="SSF54631">
    <property type="entry name" value="CBS-domain pair"/>
    <property type="match status" value="1"/>
</dbReference>
<dbReference type="SUPFAM" id="SSF56176">
    <property type="entry name" value="FAD-binding/transporter-associated domain-like"/>
    <property type="match status" value="1"/>
</dbReference>
<dbReference type="PROSITE" id="PS51371">
    <property type="entry name" value="CBS"/>
    <property type="match status" value="2"/>
</dbReference>
<name>Y323_BUCAI</name>
<organism>
    <name type="scientific">Buchnera aphidicola subsp. Acyrthosiphon pisum (strain APS)</name>
    <name type="common">Acyrthosiphon pisum symbiotic bacterium</name>
    <dbReference type="NCBI Taxonomy" id="107806"/>
    <lineage>
        <taxon>Bacteria</taxon>
        <taxon>Pseudomonadati</taxon>
        <taxon>Pseudomonadota</taxon>
        <taxon>Gammaproteobacteria</taxon>
        <taxon>Enterobacterales</taxon>
        <taxon>Erwiniaceae</taxon>
        <taxon>Buchnera</taxon>
    </lineage>
</organism>
<feature type="chain" id="PRO_0000088375" description="UPF0053 protein BU323">
    <location>
        <begin position="1"/>
        <end position="521"/>
    </location>
</feature>
<feature type="transmembrane region" description="Helical" evidence="1">
    <location>
        <begin position="13"/>
        <end position="33"/>
    </location>
</feature>
<feature type="transmembrane region" description="Helical" evidence="1">
    <location>
        <begin position="49"/>
        <end position="69"/>
    </location>
</feature>
<feature type="transmembrane region" description="Helical" evidence="1">
    <location>
        <begin position="80"/>
        <end position="100"/>
    </location>
</feature>
<feature type="transmembrane region" description="Helical" evidence="1">
    <location>
        <begin position="125"/>
        <end position="145"/>
    </location>
</feature>
<feature type="transmembrane region" description="Helical" evidence="1">
    <location>
        <begin position="150"/>
        <end position="170"/>
    </location>
</feature>
<feature type="transmembrane region" description="Helical" evidence="1">
    <location>
        <begin position="185"/>
        <end position="205"/>
    </location>
</feature>
<feature type="transmembrane region" description="Helical" evidence="1">
    <location>
        <begin position="207"/>
        <end position="227"/>
    </location>
</feature>
<feature type="domain" description="CBS 1" evidence="2">
    <location>
        <begin position="311"/>
        <end position="370"/>
    </location>
</feature>
<feature type="domain" description="CBS 2" evidence="2">
    <location>
        <begin position="374"/>
        <end position="434"/>
    </location>
</feature>
<accession>P57408</accession>
<sequence length="521" mass="58723">MEFFLDPSTWAGLLTLVILEVVLGIDNLIFVAILSEKLPPNQRDKARLIGLGLALVMRLALLSLISWIVTLNSPIVHNKFFSLSIRDIILLFGGFFLLFKTTMELHERLENNHHENSENKNYAGFWAVVIQIVVLDAVFSLDAIITAVGMVNQLLIMMIAVILATFLMLLASKALTNFINLHQTVVVLCLSFLLMIGFSLVTEALRFCIPKGYLYAAIGFSILIEIFNQIARHNFMKNQSRRPMRQRAAEAILRLMVGEQNKKQQIKKIEINSQKTDSIQSSKEMETFKDEERYMINGVLTLAGRSIRSIMTPRSNISWVNTEKNTDEIRMQLLDTPHSLFPVCKGELDEIIGIVRAKELLVAIEKKIDASTFSSKILPIIIPDTLDPIKLLGVLRRAQGSFVIVSNEFGVVQGLITPLDVLEAIAGEFPDADETPDIIQENNSWLVKGETDLHSLQQLLNTEELIKEDNYASLGGLLIAQKGQLPIPGEIIHIHPFYFHIVKATEYRIDLVRIIKNQDDN</sequence>
<comment type="subcellular location">
    <subcellularLocation>
        <location evidence="3">Cell membrane</location>
        <topology evidence="3">Multi-pass membrane protein</topology>
    </subcellularLocation>
</comment>
<comment type="similarity">
    <text evidence="3">Belongs to the UPF0053 family.</text>
</comment>
<keyword id="KW-0129">CBS domain</keyword>
<keyword id="KW-1003">Cell membrane</keyword>
<keyword id="KW-0472">Membrane</keyword>
<keyword id="KW-1185">Reference proteome</keyword>
<keyword id="KW-0677">Repeat</keyword>
<keyword id="KW-0812">Transmembrane</keyword>
<keyword id="KW-1133">Transmembrane helix</keyword>
<evidence type="ECO:0000255" key="1"/>
<evidence type="ECO:0000255" key="2">
    <source>
        <dbReference type="PROSITE-ProRule" id="PRU00703"/>
    </source>
</evidence>
<evidence type="ECO:0000305" key="3"/>
<protein>
    <recommendedName>
        <fullName>UPF0053 protein BU323</fullName>
    </recommendedName>
</protein>
<proteinExistence type="inferred from homology"/>
<reference key="1">
    <citation type="journal article" date="2000" name="Nature">
        <title>Genome sequence of the endocellular bacterial symbiont of aphids Buchnera sp. APS.</title>
        <authorList>
            <person name="Shigenobu S."/>
            <person name="Watanabe H."/>
            <person name="Hattori M."/>
            <person name="Sakaki Y."/>
            <person name="Ishikawa H."/>
        </authorList>
    </citation>
    <scope>NUCLEOTIDE SEQUENCE [LARGE SCALE GENOMIC DNA]</scope>
    <source>
        <strain>APS</strain>
    </source>
</reference>
<gene>
    <name type="ordered locus">BU323</name>
</gene>